<proteinExistence type="inferred from homology"/>
<reference key="1">
    <citation type="journal article" date="2005" name="Nature">
        <title>The genome of the social amoeba Dictyostelium discoideum.</title>
        <authorList>
            <person name="Eichinger L."/>
            <person name="Pachebat J.A."/>
            <person name="Gloeckner G."/>
            <person name="Rajandream M.A."/>
            <person name="Sucgang R."/>
            <person name="Berriman M."/>
            <person name="Song J."/>
            <person name="Olsen R."/>
            <person name="Szafranski K."/>
            <person name="Xu Q."/>
            <person name="Tunggal B."/>
            <person name="Kummerfeld S."/>
            <person name="Madera M."/>
            <person name="Konfortov B.A."/>
            <person name="Rivero F."/>
            <person name="Bankier A.T."/>
            <person name="Lehmann R."/>
            <person name="Hamlin N."/>
            <person name="Davies R."/>
            <person name="Gaudet P."/>
            <person name="Fey P."/>
            <person name="Pilcher K."/>
            <person name="Chen G."/>
            <person name="Saunders D."/>
            <person name="Sodergren E.J."/>
            <person name="Davis P."/>
            <person name="Kerhornou A."/>
            <person name="Nie X."/>
            <person name="Hall N."/>
            <person name="Anjard C."/>
            <person name="Hemphill L."/>
            <person name="Bason N."/>
            <person name="Farbrother P."/>
            <person name="Desany B."/>
            <person name="Just E."/>
            <person name="Morio T."/>
            <person name="Rost R."/>
            <person name="Churcher C.M."/>
            <person name="Cooper J."/>
            <person name="Haydock S."/>
            <person name="van Driessche N."/>
            <person name="Cronin A."/>
            <person name="Goodhead I."/>
            <person name="Muzny D.M."/>
            <person name="Mourier T."/>
            <person name="Pain A."/>
            <person name="Lu M."/>
            <person name="Harper D."/>
            <person name="Lindsay R."/>
            <person name="Hauser H."/>
            <person name="James K.D."/>
            <person name="Quiles M."/>
            <person name="Madan Babu M."/>
            <person name="Saito T."/>
            <person name="Buchrieser C."/>
            <person name="Wardroper A."/>
            <person name="Felder M."/>
            <person name="Thangavelu M."/>
            <person name="Johnson D."/>
            <person name="Knights A."/>
            <person name="Loulseged H."/>
            <person name="Mungall K.L."/>
            <person name="Oliver K."/>
            <person name="Price C."/>
            <person name="Quail M.A."/>
            <person name="Urushihara H."/>
            <person name="Hernandez J."/>
            <person name="Rabbinowitsch E."/>
            <person name="Steffen D."/>
            <person name="Sanders M."/>
            <person name="Ma J."/>
            <person name="Kohara Y."/>
            <person name="Sharp S."/>
            <person name="Simmonds M.N."/>
            <person name="Spiegler S."/>
            <person name="Tivey A."/>
            <person name="Sugano S."/>
            <person name="White B."/>
            <person name="Walker D."/>
            <person name="Woodward J.R."/>
            <person name="Winckler T."/>
            <person name="Tanaka Y."/>
            <person name="Shaulsky G."/>
            <person name="Schleicher M."/>
            <person name="Weinstock G.M."/>
            <person name="Rosenthal A."/>
            <person name="Cox E.C."/>
            <person name="Chisholm R.L."/>
            <person name="Gibbs R.A."/>
            <person name="Loomis W.F."/>
            <person name="Platzer M."/>
            <person name="Kay R.R."/>
            <person name="Williams J.G."/>
            <person name="Dear P.H."/>
            <person name="Noegel A.A."/>
            <person name="Barrell B.G."/>
            <person name="Kuspa A."/>
        </authorList>
    </citation>
    <scope>NUCLEOTIDE SEQUENCE [LARGE SCALE GENOMIC DNA]</scope>
    <source>
        <strain>AX4</strain>
    </source>
</reference>
<keyword id="KW-0240">DNA-directed RNA polymerase</keyword>
<keyword id="KW-0539">Nucleus</keyword>
<keyword id="KW-1185">Reference proteome</keyword>
<keyword id="KW-0804">Transcription</keyword>
<name>RPC9_DICDI</name>
<comment type="function">
    <text evidence="1">DNA-dependent RNA polymerase catalyzes the transcription of DNA into RNA using the four ribonucleoside triphosphates as substrates. Specific component of RNA polymerase III which synthesizes small RNAs, such as 5S rRNA and tRNAs (By similarity).</text>
</comment>
<comment type="subunit">
    <text evidence="1">Component of the RNA polymerase III (Pol III) complex.</text>
</comment>
<comment type="subcellular location">
    <subcellularLocation>
        <location evidence="1">Nucleus</location>
    </subcellularLocation>
</comment>
<comment type="similarity">
    <text evidence="2">Belongs to the eukaryotic RPC9 RNA polymerase subunit family.</text>
</comment>
<gene>
    <name type="primary">rpc9</name>
    <name type="ORF">DDB_G0286521</name>
</gene>
<protein>
    <recommendedName>
        <fullName>DNA-directed RNA polymerase III subunit rpc9</fullName>
        <shortName>RNA polymerase III subunit C9</shortName>
    </recommendedName>
</protein>
<organism>
    <name type="scientific">Dictyostelium discoideum</name>
    <name type="common">Social amoeba</name>
    <dbReference type="NCBI Taxonomy" id="44689"/>
    <lineage>
        <taxon>Eukaryota</taxon>
        <taxon>Amoebozoa</taxon>
        <taxon>Evosea</taxon>
        <taxon>Eumycetozoa</taxon>
        <taxon>Dictyostelia</taxon>
        <taxon>Dictyosteliales</taxon>
        <taxon>Dictyosteliaceae</taxon>
        <taxon>Dictyostelium</taxon>
    </lineage>
</organism>
<sequence length="130" mass="14892">MKIIKKDKEEIITNFEVLQLLKHKRRIEEQVLLNEFVNNVIRYLETTPASKQTIESVKECKKSVTKLADTSGCKILTGEMLQILNIAPSSEVEVHLVIEDCEDRIDAKEVLKEIKNSLGEEAVIRDEDNL</sequence>
<evidence type="ECO:0000250" key="1"/>
<evidence type="ECO:0000305" key="2"/>
<accession>Q54LP2</accession>
<dbReference type="EMBL" id="AAFI02000087">
    <property type="protein sequence ID" value="EAL64187.1"/>
    <property type="molecule type" value="Genomic_DNA"/>
</dbReference>
<dbReference type="RefSeq" id="XP_637690.1">
    <property type="nucleotide sequence ID" value="XM_632598.1"/>
</dbReference>
<dbReference type="SMR" id="Q54LP2"/>
<dbReference type="FunCoup" id="Q54LP2">
    <property type="interactions" value="15"/>
</dbReference>
<dbReference type="STRING" id="44689.Q54LP2"/>
<dbReference type="PaxDb" id="44689-DDB0304989"/>
<dbReference type="EnsemblProtists" id="EAL64187">
    <property type="protein sequence ID" value="EAL64187"/>
    <property type="gene ID" value="DDB_G0286521"/>
</dbReference>
<dbReference type="GeneID" id="8625656"/>
<dbReference type="KEGG" id="ddi:DDB_G0286521"/>
<dbReference type="dictyBase" id="DDB_G0286521">
    <property type="gene designation" value="rpc9"/>
</dbReference>
<dbReference type="VEuPathDB" id="AmoebaDB:DDB_G0286521"/>
<dbReference type="eggNOG" id="ENOG502RI0N">
    <property type="taxonomic scope" value="Eukaryota"/>
</dbReference>
<dbReference type="HOGENOM" id="CLU_1942030_0_0_1"/>
<dbReference type="InParanoid" id="Q54LP2"/>
<dbReference type="OMA" id="CEDRIDA"/>
<dbReference type="PhylomeDB" id="Q54LP2"/>
<dbReference type="Reactome" id="R-DDI-76061">
    <property type="pathway name" value="RNA Polymerase III Transcription Initiation From Type 1 Promoter"/>
</dbReference>
<dbReference type="Reactome" id="R-DDI-76066">
    <property type="pathway name" value="RNA Polymerase III Transcription Initiation From Type 2 Promoter"/>
</dbReference>
<dbReference type="PRO" id="PR:Q54LP2"/>
<dbReference type="Proteomes" id="UP000002195">
    <property type="component" value="Chromosome 4"/>
</dbReference>
<dbReference type="GO" id="GO:0009360">
    <property type="term" value="C:DNA polymerase III complex"/>
    <property type="evidence" value="ECO:0000250"/>
    <property type="project" value="UniProtKB"/>
</dbReference>
<dbReference type="GO" id="GO:0005666">
    <property type="term" value="C:RNA polymerase III complex"/>
    <property type="evidence" value="ECO:0000250"/>
    <property type="project" value="UniProtKB"/>
</dbReference>
<dbReference type="GO" id="GO:0003899">
    <property type="term" value="F:DNA-directed RNA polymerase activity"/>
    <property type="evidence" value="ECO:0000250"/>
    <property type="project" value="UniProtKB"/>
</dbReference>
<dbReference type="GO" id="GO:0000166">
    <property type="term" value="F:nucleotide binding"/>
    <property type="evidence" value="ECO:0007669"/>
    <property type="project" value="InterPro"/>
</dbReference>
<dbReference type="GO" id="GO:0006383">
    <property type="term" value="P:transcription by RNA polymerase III"/>
    <property type="evidence" value="ECO:0000250"/>
    <property type="project" value="UniProtKB"/>
</dbReference>
<dbReference type="GO" id="GO:0006384">
    <property type="term" value="P:transcription initiation at RNA polymerase III promoter"/>
    <property type="evidence" value="ECO:0000250"/>
    <property type="project" value="UniProtKB"/>
</dbReference>
<dbReference type="FunFam" id="1.20.1250.40:FF:000022">
    <property type="entry name" value="DNA-directed RNA polymerase III subunit rpc9"/>
    <property type="match status" value="1"/>
</dbReference>
<dbReference type="Gene3D" id="1.20.1250.40">
    <property type="match status" value="1"/>
</dbReference>
<dbReference type="InterPro" id="IPR010997">
    <property type="entry name" value="HRDC-like_sf"/>
</dbReference>
<dbReference type="InterPro" id="IPR006590">
    <property type="entry name" value="RNA_pol_Rpb4/RPC9_core"/>
</dbReference>
<dbReference type="InterPro" id="IPR005574">
    <property type="entry name" value="Rpb4/RPC9"/>
</dbReference>
<dbReference type="InterPro" id="IPR038324">
    <property type="entry name" value="Rpb4/RPC9_sf"/>
</dbReference>
<dbReference type="InterPro" id="IPR038846">
    <property type="entry name" value="RPC9"/>
</dbReference>
<dbReference type="PANTHER" id="PTHR15561">
    <property type="entry name" value="CALCITONIN GENE-RELATED PEPTIDE-RECEPTOR COMPONENT PROTEIN"/>
    <property type="match status" value="1"/>
</dbReference>
<dbReference type="PANTHER" id="PTHR15561:SF0">
    <property type="entry name" value="DNA-DIRECTED RNA POLYMERASE III SUBUNIT RPC9"/>
    <property type="match status" value="1"/>
</dbReference>
<dbReference type="Pfam" id="PF03874">
    <property type="entry name" value="RNA_pol_Rpb4"/>
    <property type="match status" value="1"/>
</dbReference>
<dbReference type="SMART" id="SM00657">
    <property type="entry name" value="RPOL4c"/>
    <property type="match status" value="1"/>
</dbReference>
<dbReference type="SUPFAM" id="SSF47819">
    <property type="entry name" value="HRDC-like"/>
    <property type="match status" value="1"/>
</dbReference>
<feature type="chain" id="PRO_0000329314" description="DNA-directed RNA polymerase III subunit rpc9">
    <location>
        <begin position="1"/>
        <end position="130"/>
    </location>
</feature>